<name>RF1_VIBC1</name>
<dbReference type="EMBL" id="CP000789">
    <property type="protein sequence ID" value="ABU70229.1"/>
    <property type="molecule type" value="Genomic_DNA"/>
</dbReference>
<dbReference type="RefSeq" id="WP_012127201.1">
    <property type="nucleotide sequence ID" value="NC_022269.1"/>
</dbReference>
<dbReference type="SMR" id="A7MY68"/>
<dbReference type="GeneID" id="67378158"/>
<dbReference type="KEGG" id="vha:VIBHAR_01250"/>
<dbReference type="PATRIC" id="fig|338187.25.peg.1392"/>
<dbReference type="Proteomes" id="UP000008152">
    <property type="component" value="Chromosome I"/>
</dbReference>
<dbReference type="GO" id="GO:0005737">
    <property type="term" value="C:cytoplasm"/>
    <property type="evidence" value="ECO:0007669"/>
    <property type="project" value="UniProtKB-SubCell"/>
</dbReference>
<dbReference type="GO" id="GO:0016149">
    <property type="term" value="F:translation release factor activity, codon specific"/>
    <property type="evidence" value="ECO:0007669"/>
    <property type="project" value="UniProtKB-UniRule"/>
</dbReference>
<dbReference type="FunFam" id="3.30.160.20:FF:000004">
    <property type="entry name" value="Peptide chain release factor 1"/>
    <property type="match status" value="1"/>
</dbReference>
<dbReference type="FunFam" id="3.30.70.1660:FF:000002">
    <property type="entry name" value="Peptide chain release factor 1"/>
    <property type="match status" value="1"/>
</dbReference>
<dbReference type="FunFam" id="3.30.70.1660:FF:000004">
    <property type="entry name" value="Peptide chain release factor 1"/>
    <property type="match status" value="1"/>
</dbReference>
<dbReference type="Gene3D" id="3.30.160.20">
    <property type="match status" value="1"/>
</dbReference>
<dbReference type="Gene3D" id="3.30.70.1660">
    <property type="match status" value="1"/>
</dbReference>
<dbReference type="Gene3D" id="6.10.140.1950">
    <property type="match status" value="1"/>
</dbReference>
<dbReference type="HAMAP" id="MF_00093">
    <property type="entry name" value="Rel_fac_1"/>
    <property type="match status" value="1"/>
</dbReference>
<dbReference type="InterPro" id="IPR005139">
    <property type="entry name" value="PCRF"/>
</dbReference>
<dbReference type="InterPro" id="IPR000352">
    <property type="entry name" value="Pep_chain_release_fac_I"/>
</dbReference>
<dbReference type="InterPro" id="IPR045853">
    <property type="entry name" value="Pep_chain_release_fac_I_sf"/>
</dbReference>
<dbReference type="InterPro" id="IPR050057">
    <property type="entry name" value="Prokaryotic/Mito_RF"/>
</dbReference>
<dbReference type="InterPro" id="IPR004373">
    <property type="entry name" value="RF-1"/>
</dbReference>
<dbReference type="NCBIfam" id="TIGR00019">
    <property type="entry name" value="prfA"/>
    <property type="match status" value="1"/>
</dbReference>
<dbReference type="NCBIfam" id="NF001859">
    <property type="entry name" value="PRK00591.1"/>
    <property type="match status" value="1"/>
</dbReference>
<dbReference type="PANTHER" id="PTHR43804">
    <property type="entry name" value="LD18447P"/>
    <property type="match status" value="1"/>
</dbReference>
<dbReference type="PANTHER" id="PTHR43804:SF7">
    <property type="entry name" value="LD18447P"/>
    <property type="match status" value="1"/>
</dbReference>
<dbReference type="Pfam" id="PF03462">
    <property type="entry name" value="PCRF"/>
    <property type="match status" value="1"/>
</dbReference>
<dbReference type="Pfam" id="PF00472">
    <property type="entry name" value="RF-1"/>
    <property type="match status" value="1"/>
</dbReference>
<dbReference type="SMART" id="SM00937">
    <property type="entry name" value="PCRF"/>
    <property type="match status" value="1"/>
</dbReference>
<dbReference type="SUPFAM" id="SSF75620">
    <property type="entry name" value="Release factor"/>
    <property type="match status" value="1"/>
</dbReference>
<dbReference type="PROSITE" id="PS00745">
    <property type="entry name" value="RF_PROK_I"/>
    <property type="match status" value="1"/>
</dbReference>
<gene>
    <name evidence="1" type="primary">prfA</name>
    <name type="ordered locus">VIBHAR_01250</name>
</gene>
<evidence type="ECO:0000255" key="1">
    <source>
        <dbReference type="HAMAP-Rule" id="MF_00093"/>
    </source>
</evidence>
<proteinExistence type="inferred from homology"/>
<sequence>MKASILTKLETLVERYEEVQHLLGDPDVIGNQDKFRALSKEYSQLEEVTKCFQAYQQAQDDLAAAEDMANEDDEEMREMAQEEIKEAKEAIERLTDELQILLLPKDPNDDRNCFLEIRAGAGGDEAGIFAGDLFRMYSKYAEKRGWRIEVMSSNEAEHGGYKEMIAKVSGDGAYGVLKFESGGHRVQRVPATESQGRVHTSACTVAVMAEIPEADLPEIKAADLKIDTFRASGAGGQHVNTTDSAIRITHLPTGTVVECQDERSQHKNKAKAMAVLAARIVQAEEERRAAEVSDTRRNLLGSGDRSDRIRTYNYPQGRVSDHRINLTIYRLNEVMEGDLQSLIDPVVQEHQADQLAALAENG</sequence>
<keyword id="KW-0963">Cytoplasm</keyword>
<keyword id="KW-0488">Methylation</keyword>
<keyword id="KW-0648">Protein biosynthesis</keyword>
<organism>
    <name type="scientific">Vibrio campbellii (strain ATCC BAA-1116)</name>
    <dbReference type="NCBI Taxonomy" id="2902295"/>
    <lineage>
        <taxon>Bacteria</taxon>
        <taxon>Pseudomonadati</taxon>
        <taxon>Pseudomonadota</taxon>
        <taxon>Gammaproteobacteria</taxon>
        <taxon>Vibrionales</taxon>
        <taxon>Vibrionaceae</taxon>
        <taxon>Vibrio</taxon>
    </lineage>
</organism>
<comment type="function">
    <text evidence="1">Peptide chain release factor 1 directs the termination of translation in response to the peptide chain termination codons UAG and UAA.</text>
</comment>
<comment type="subcellular location">
    <subcellularLocation>
        <location evidence="1">Cytoplasm</location>
    </subcellularLocation>
</comment>
<comment type="PTM">
    <text evidence="1">Methylated by PrmC. Methylation increases the termination efficiency of RF1.</text>
</comment>
<comment type="similarity">
    <text evidence="1">Belongs to the prokaryotic/mitochondrial release factor family.</text>
</comment>
<feature type="chain" id="PRO_1000004966" description="Peptide chain release factor 1">
    <location>
        <begin position="1"/>
        <end position="362"/>
    </location>
</feature>
<feature type="modified residue" description="N5-methylglutamine" evidence="1">
    <location>
        <position position="237"/>
    </location>
</feature>
<protein>
    <recommendedName>
        <fullName evidence="1">Peptide chain release factor 1</fullName>
        <shortName evidence="1">RF-1</shortName>
    </recommendedName>
</protein>
<reference key="1">
    <citation type="submission" date="2007-08" db="EMBL/GenBank/DDBJ databases">
        <authorList>
            <consortium name="The Vibrio harveyi Genome Sequencing Project"/>
            <person name="Bassler B."/>
            <person name="Clifton S.W."/>
            <person name="Fulton L."/>
            <person name="Delehaunty K."/>
            <person name="Fronick C."/>
            <person name="Harrison M."/>
            <person name="Markivic C."/>
            <person name="Fulton R."/>
            <person name="Tin-Wollam A.-M."/>
            <person name="Shah N."/>
            <person name="Pepin K."/>
            <person name="Nash W."/>
            <person name="Thiruvilangam P."/>
            <person name="Bhonagiri V."/>
            <person name="Waters C."/>
            <person name="Tu K.C."/>
            <person name="Irgon J."/>
            <person name="Wilson R.K."/>
        </authorList>
    </citation>
    <scope>NUCLEOTIDE SEQUENCE [LARGE SCALE GENOMIC DNA]</scope>
    <source>
        <strain>ATCC BAA-1116 / BB120</strain>
    </source>
</reference>
<accession>A7MY68</accession>